<organismHost>
    <name type="scientific">Aves</name>
    <dbReference type="NCBI Taxonomy" id="8782"/>
</organismHost>
<organismHost>
    <name type="scientific">Felis catus</name>
    <name type="common">Cat</name>
    <name type="synonym">Felis silvestris catus</name>
    <dbReference type="NCBI Taxonomy" id="9685"/>
</organismHost>
<organismHost>
    <name type="scientific">Homo sapiens</name>
    <name type="common">Human</name>
    <dbReference type="NCBI Taxonomy" id="9606"/>
</organismHost>
<organismHost>
    <name type="scientific">Panthera pardus</name>
    <name type="common">Leopard</name>
    <name type="synonym">Felis pardus</name>
    <dbReference type="NCBI Taxonomy" id="9691"/>
</organismHost>
<organismHost>
    <name type="scientific">Panthera tigris</name>
    <name type="common">Tiger</name>
    <dbReference type="NCBI Taxonomy" id="9694"/>
</organismHost>
<organismHost>
    <name type="scientific">Sus scrofa</name>
    <name type="common">Pig</name>
    <dbReference type="NCBI Taxonomy" id="9823"/>
</organismHost>
<keyword id="KW-0025">Alternative splicing</keyword>
<keyword id="KW-1262">Eukaryotic host gene expression shutoff by virus</keyword>
<keyword id="KW-1035">Host cytoplasm</keyword>
<keyword id="KW-1190">Host gene expression shutoff by virus</keyword>
<keyword id="KW-1192">Host mRNA suppression by virus</keyword>
<keyword id="KW-1048">Host nucleus</keyword>
<keyword id="KW-0945">Host-virus interaction</keyword>
<keyword id="KW-1090">Inhibition of host innate immune response by virus</keyword>
<keyword id="KW-1114">Inhibition of host interferon signaling pathway by virus</keyword>
<keyword id="KW-1102">Inhibition of host PKR by virus</keyword>
<keyword id="KW-1103">Inhibition of host pre-mRNA processing by virus</keyword>
<keyword id="KW-1088">Inhibition of host RIG-I by virus</keyword>
<keyword id="KW-1113">Inhibition of host RLR pathway by virus</keyword>
<keyword id="KW-0922">Interferon antiviral system evasion</keyword>
<keyword id="KW-0694">RNA-binding</keyword>
<keyword id="KW-0832">Ubl conjugation</keyword>
<keyword id="KW-0899">Viral immunoevasion</keyword>
<accession>Q6DP28</accession>
<organism>
    <name type="scientific">Influenza A virus (strain A/Chicken/Shantou/4231/2003 H5N1 genotype V)</name>
    <dbReference type="NCBI Taxonomy" id="284184"/>
    <lineage>
        <taxon>Viruses</taxon>
        <taxon>Riboviria</taxon>
        <taxon>Orthornavirae</taxon>
        <taxon>Negarnaviricota</taxon>
        <taxon>Polyploviricotina</taxon>
        <taxon>Insthoviricetes</taxon>
        <taxon>Articulavirales</taxon>
        <taxon>Orthomyxoviridae</taxon>
        <taxon>Alphainfluenzavirus</taxon>
        <taxon>Alphainfluenzavirus influenzae</taxon>
        <taxon>Influenza A virus</taxon>
    </lineage>
</organism>
<proteinExistence type="inferred from homology"/>
<sequence length="225" mass="25637">MDPNTVSSFQVDCFLWHVRKRFADQELGDAPFLDRLRRDQKSLRGRGNTLGLDIETATRAGKQIVERILEEESDEALKMPASRYLTDMTLEEMSRDWFMLMPKQKVAGSLCIKMDQAIMDKTIILKANFSVIFDRLETLILLRAFTEEGAIVGEISPLPSLPGHTGEDVKNAIDVLIGGLEWNDNTVRVSETIQRFAWRNSDEDGRLPLPPNQKRKMARTIESEV</sequence>
<gene>
    <name evidence="1" type="primary">NS</name>
</gene>
<protein>
    <recommendedName>
        <fullName evidence="1">Non-structural protein 1</fullName>
        <shortName evidence="1">NS1</shortName>
    </recommendedName>
    <alternativeName>
        <fullName evidence="1">NS1A</fullName>
    </alternativeName>
</protein>
<name>NS1_I03A1</name>
<reference key="1">
    <citation type="journal article" date="2004" name="Nature">
        <title>Genesis of a highly pathogenic and potentially pandemic H5N1 influenza virus in eastern Asia.</title>
        <authorList>
            <person name="Li K.S."/>
            <person name="Guan Y."/>
            <person name="Wang J."/>
            <person name="Smith G.J.D."/>
            <person name="Xu K.M."/>
            <person name="Duan L."/>
            <person name="Rahardjo A.P."/>
            <person name="Puthavathana P."/>
            <person name="Buranathai C."/>
            <person name="Nguyen T.D."/>
            <person name="Estoepangestie A.T.S."/>
            <person name="Chaisingh A."/>
            <person name="Auewarakul P."/>
            <person name="Long H.T."/>
            <person name="Hanh N.T.H."/>
            <person name="Webby R.J."/>
            <person name="Poon L.L.M."/>
            <person name="Chen H."/>
            <person name="Shortridge K.F."/>
            <person name="Yuen K.Y."/>
            <person name="Webster R.G."/>
            <person name="Peiris J.S.M."/>
        </authorList>
    </citation>
    <scope>NUCLEOTIDE SEQUENCE [GENOMIC RNA]</scope>
</reference>
<comment type="function">
    <text evidence="1">Inhibits post-transcriptional processing of cellular pre-mRNA, by binding and inhibiting two cellular proteins that are required for the 3'-end processing of cellular pre-mRNAs: the 30 kDa cleavage and polyadenylation specificity factor/CPSF4 and the poly(A)-binding protein 2/PABPN1. In turn, unprocessed 3' end pre-mRNAs accumulate in the host nucleus and are no longer exported to the cytoplasm. Cellular protein synthesis is thereby shut off very early after virus infection. Viral protein synthesis is not affected by the inhibition of the cellular 3' end processing machinery because the poly(A) tails of viral mRNAs are produced by the viral polymerase through a stuttering mechanism. Prevents the establishment of the cellular antiviral state by inhibiting TRIM25-mediated RIGI ubiquitination, which normally triggers the antiviral transduction signal that leads to the activation of type I IFN genes by transcription factors IRF3 and IRF7. Also binds poly(A) and U6 snRNA. Inhibits the integrated stress response (ISR) in the infected cell by blocking dsRNA binding by EIF2AK2/PKR and further phosphorylation of EIF2S1/EIF-2ALPHA. Stress granule formation is thus inhibited, which allows protein synthesis and viral replication.</text>
</comment>
<comment type="subunit">
    <text evidence="1">Homodimer. Interacts with host TRIM25 (via coiled coil); this interaction specifically inhibits TRIM25 multimerization and TRIM25-mediated RIGI CARD ubiquitination. Interacts with human EIF2AK2/PKR, CPSF4, IVNS1ABP and PABPN1.</text>
</comment>
<comment type="subcellular location">
    <subcellularLocation>
        <location evidence="1">Host nucleus</location>
    </subcellularLocation>
    <subcellularLocation>
        <location evidence="1">Host cytoplasm</location>
    </subcellularLocation>
    <text evidence="1">In uninfected, transfected cells, NS1 is localized in the nucleus. Only in virus infected cells, the nuclear export signal is unveiled, presumably by a viral protein, and a fraction of NS1 is exported in the cytoplasm.</text>
</comment>
<comment type="alternative products">
    <event type="alternative splicing"/>
    <isoform>
        <id>Q6DP28-1</id>
        <name>NS1</name>
        <sequence type="displayed"/>
    </isoform>
    <isoform>
        <id>Q6DP29-1</id>
        <name>NEP</name>
        <name>NS2</name>
        <sequence type="external"/>
    </isoform>
</comment>
<comment type="domain">
    <text evidence="1">The dsRNA-binding region is required for suppression of RNA silencing.</text>
</comment>
<comment type="PTM">
    <text evidence="1">Upon interferon induction, ISGylated via host HERC5; this results in the impairment of NS1 interaction with RNA targets due to its inability to form homodimers and to interact with host EIF2AK2/PKR.</text>
</comment>
<comment type="similarity">
    <text evidence="1">Belongs to the influenza A viruses NS1 family.</text>
</comment>
<feature type="chain" id="PRO_0000311755" description="Non-structural protein 1">
    <location>
        <begin position="1"/>
        <end position="225"/>
    </location>
</feature>
<feature type="region of interest" description="RNA-binding and homodimerization" evidence="1">
    <location>
        <begin position="1"/>
        <end position="73"/>
    </location>
</feature>
<feature type="region of interest" description="CPSF4-binding" evidence="1">
    <location>
        <begin position="175"/>
        <end position="210"/>
    </location>
</feature>
<feature type="region of interest" description="Disordered" evidence="2">
    <location>
        <begin position="204"/>
        <end position="225"/>
    </location>
</feature>
<feature type="region of interest" description="PABPN1-binding" evidence="1">
    <location>
        <begin position="218"/>
        <end position="225"/>
    </location>
</feature>
<feature type="short sequence motif" description="Nuclear localization signal" evidence="1">
    <location>
        <begin position="34"/>
        <end position="38"/>
    </location>
</feature>
<feature type="short sequence motif" description="Nuclear export signal" evidence="1">
    <location>
        <begin position="132"/>
        <end position="141"/>
    </location>
</feature>
<dbReference type="EMBL" id="AY651585">
    <property type="protein sequence ID" value="AAT73459.1"/>
    <property type="molecule type" value="Genomic_RNA"/>
</dbReference>
<dbReference type="SMR" id="Q6DP28"/>
<dbReference type="GO" id="GO:0030430">
    <property type="term" value="C:host cell cytoplasm"/>
    <property type="evidence" value="ECO:0007669"/>
    <property type="project" value="UniProtKB-SubCell"/>
</dbReference>
<dbReference type="GO" id="GO:0042025">
    <property type="term" value="C:host cell nucleus"/>
    <property type="evidence" value="ECO:0007669"/>
    <property type="project" value="UniProtKB-SubCell"/>
</dbReference>
<dbReference type="GO" id="GO:0030291">
    <property type="term" value="F:protein serine/threonine kinase inhibitor activity"/>
    <property type="evidence" value="ECO:0007669"/>
    <property type="project" value="UniProtKB-KW"/>
</dbReference>
<dbReference type="GO" id="GO:0003723">
    <property type="term" value="F:RNA binding"/>
    <property type="evidence" value="ECO:0007669"/>
    <property type="project" value="UniProtKB-KW"/>
</dbReference>
<dbReference type="GO" id="GO:0039540">
    <property type="term" value="P:symbiont-mediated suppression of host cytoplasmic pattern recognition receptor signaling pathway via inhibition of RIG-I activity"/>
    <property type="evidence" value="ECO:0007669"/>
    <property type="project" value="UniProtKB-KW"/>
</dbReference>
<dbReference type="GO" id="GO:0039657">
    <property type="term" value="P:symbiont-mediated suppression of host gene expression"/>
    <property type="evidence" value="ECO:0007669"/>
    <property type="project" value="UniProtKB-KW"/>
</dbReference>
<dbReference type="GO" id="GO:0039524">
    <property type="term" value="P:symbiont-mediated suppression of host mRNA processing"/>
    <property type="evidence" value="ECO:0007669"/>
    <property type="project" value="UniProtKB-KW"/>
</dbReference>
<dbReference type="GO" id="GO:0039580">
    <property type="term" value="P:symbiont-mediated suppression of host PKR/eIFalpha signaling"/>
    <property type="evidence" value="ECO:0007669"/>
    <property type="project" value="UniProtKB-KW"/>
</dbReference>
<dbReference type="GO" id="GO:0039502">
    <property type="term" value="P:symbiont-mediated suppression of host type I interferon-mediated signaling pathway"/>
    <property type="evidence" value="ECO:0007669"/>
    <property type="project" value="UniProtKB-KW"/>
</dbReference>
<dbReference type="FunFam" id="1.10.287.10:FF:000001">
    <property type="entry name" value="Non-structural protein 1"/>
    <property type="match status" value="1"/>
</dbReference>
<dbReference type="FunFam" id="3.30.420.330:FF:000001">
    <property type="entry name" value="Non-structural protein 1"/>
    <property type="match status" value="1"/>
</dbReference>
<dbReference type="Gene3D" id="3.30.420.330">
    <property type="entry name" value="Influenza virus non-structural protein, effector domain"/>
    <property type="match status" value="1"/>
</dbReference>
<dbReference type="Gene3D" id="1.10.287.10">
    <property type="entry name" value="S15/NS1, RNA-binding"/>
    <property type="match status" value="1"/>
</dbReference>
<dbReference type="HAMAP" id="MF_04066">
    <property type="entry name" value="INFV_NS1"/>
    <property type="match status" value="1"/>
</dbReference>
<dbReference type="InterPro" id="IPR004208">
    <property type="entry name" value="NS1"/>
</dbReference>
<dbReference type="InterPro" id="IPR000256">
    <property type="entry name" value="NS1A"/>
</dbReference>
<dbReference type="InterPro" id="IPR038064">
    <property type="entry name" value="NS1A_effect_dom-like_sf"/>
</dbReference>
<dbReference type="InterPro" id="IPR009068">
    <property type="entry name" value="uS15_NS1_RNA-bd_sf"/>
</dbReference>
<dbReference type="Pfam" id="PF00600">
    <property type="entry name" value="Flu_NS1"/>
    <property type="match status" value="1"/>
</dbReference>
<dbReference type="SUPFAM" id="SSF143021">
    <property type="entry name" value="Ns1 effector domain-like"/>
    <property type="match status" value="1"/>
</dbReference>
<dbReference type="SUPFAM" id="SSF47060">
    <property type="entry name" value="S15/NS1 RNA-binding domain"/>
    <property type="match status" value="1"/>
</dbReference>
<evidence type="ECO:0000255" key="1">
    <source>
        <dbReference type="HAMAP-Rule" id="MF_04066"/>
    </source>
</evidence>
<evidence type="ECO:0000256" key="2">
    <source>
        <dbReference type="SAM" id="MobiDB-lite"/>
    </source>
</evidence>